<gene>
    <name evidence="1" type="primary">dcd</name>
    <name type="ordered locus">Bpet4091</name>
</gene>
<keyword id="KW-0378">Hydrolase</keyword>
<keyword id="KW-0546">Nucleotide metabolism</keyword>
<keyword id="KW-0547">Nucleotide-binding</keyword>
<accession>A9I7R5</accession>
<proteinExistence type="inferred from homology"/>
<evidence type="ECO:0000255" key="1">
    <source>
        <dbReference type="HAMAP-Rule" id="MF_00146"/>
    </source>
</evidence>
<reference key="1">
    <citation type="journal article" date="2008" name="BMC Genomics">
        <title>The missing link: Bordetella petrii is endowed with both the metabolic versatility of environmental bacteria and virulence traits of pathogenic Bordetellae.</title>
        <authorList>
            <person name="Gross R."/>
            <person name="Guzman C.A."/>
            <person name="Sebaihia M."/>
            <person name="Martin dos Santos V.A.P."/>
            <person name="Pieper D.H."/>
            <person name="Koebnik R."/>
            <person name="Lechner M."/>
            <person name="Bartels D."/>
            <person name="Buhrmester J."/>
            <person name="Choudhuri J.V."/>
            <person name="Ebensen T."/>
            <person name="Gaigalat L."/>
            <person name="Herrmann S."/>
            <person name="Khachane A.N."/>
            <person name="Larisch C."/>
            <person name="Link S."/>
            <person name="Linke B."/>
            <person name="Meyer F."/>
            <person name="Mormann S."/>
            <person name="Nakunst D."/>
            <person name="Rueckert C."/>
            <person name="Schneiker-Bekel S."/>
            <person name="Schulze K."/>
            <person name="Voerholter F.-J."/>
            <person name="Yevsa T."/>
            <person name="Engle J.T."/>
            <person name="Goldman W.E."/>
            <person name="Puehler A."/>
            <person name="Goebel U.B."/>
            <person name="Goesmann A."/>
            <person name="Bloecker H."/>
            <person name="Kaiser O."/>
            <person name="Martinez-Arias R."/>
        </authorList>
    </citation>
    <scope>NUCLEOTIDE SEQUENCE [LARGE SCALE GENOMIC DNA]</scope>
    <source>
        <strain>ATCC BAA-461 / DSM 12804 / CCUG 43448</strain>
    </source>
</reference>
<dbReference type="EC" id="3.5.4.13" evidence="1"/>
<dbReference type="EMBL" id="AM902716">
    <property type="protein sequence ID" value="CAP44439.1"/>
    <property type="molecule type" value="Genomic_DNA"/>
</dbReference>
<dbReference type="SMR" id="A9I7R5"/>
<dbReference type="STRING" id="94624.Bpet4091"/>
<dbReference type="KEGG" id="bpt:Bpet4091"/>
<dbReference type="eggNOG" id="COG0717">
    <property type="taxonomic scope" value="Bacteria"/>
</dbReference>
<dbReference type="UniPathway" id="UPA00610">
    <property type="reaction ID" value="UER00665"/>
</dbReference>
<dbReference type="Proteomes" id="UP000001225">
    <property type="component" value="Chromosome"/>
</dbReference>
<dbReference type="GO" id="GO:0008829">
    <property type="term" value="F:dCTP deaminase activity"/>
    <property type="evidence" value="ECO:0007669"/>
    <property type="project" value="UniProtKB-UniRule"/>
</dbReference>
<dbReference type="GO" id="GO:0000166">
    <property type="term" value="F:nucleotide binding"/>
    <property type="evidence" value="ECO:0007669"/>
    <property type="project" value="UniProtKB-KW"/>
</dbReference>
<dbReference type="GO" id="GO:0006226">
    <property type="term" value="P:dUMP biosynthetic process"/>
    <property type="evidence" value="ECO:0007669"/>
    <property type="project" value="UniProtKB-UniPathway"/>
</dbReference>
<dbReference type="GO" id="GO:0006229">
    <property type="term" value="P:dUTP biosynthetic process"/>
    <property type="evidence" value="ECO:0007669"/>
    <property type="project" value="UniProtKB-UniRule"/>
</dbReference>
<dbReference type="GO" id="GO:0015949">
    <property type="term" value="P:nucleobase-containing small molecule interconversion"/>
    <property type="evidence" value="ECO:0007669"/>
    <property type="project" value="TreeGrafter"/>
</dbReference>
<dbReference type="CDD" id="cd07557">
    <property type="entry name" value="trimeric_dUTPase"/>
    <property type="match status" value="1"/>
</dbReference>
<dbReference type="FunFam" id="2.70.40.10:FF:000001">
    <property type="entry name" value="dCTP deaminase"/>
    <property type="match status" value="1"/>
</dbReference>
<dbReference type="Gene3D" id="2.70.40.10">
    <property type="match status" value="1"/>
</dbReference>
<dbReference type="HAMAP" id="MF_00146">
    <property type="entry name" value="dCTP_deaminase"/>
    <property type="match status" value="1"/>
</dbReference>
<dbReference type="InterPro" id="IPR011962">
    <property type="entry name" value="dCTP_deaminase"/>
</dbReference>
<dbReference type="InterPro" id="IPR036157">
    <property type="entry name" value="dUTPase-like_sf"/>
</dbReference>
<dbReference type="InterPro" id="IPR033704">
    <property type="entry name" value="dUTPase_trimeric"/>
</dbReference>
<dbReference type="NCBIfam" id="TIGR02274">
    <property type="entry name" value="dCTP_deam"/>
    <property type="match status" value="1"/>
</dbReference>
<dbReference type="PANTHER" id="PTHR42680">
    <property type="entry name" value="DCTP DEAMINASE"/>
    <property type="match status" value="1"/>
</dbReference>
<dbReference type="PANTHER" id="PTHR42680:SF3">
    <property type="entry name" value="DCTP DEAMINASE"/>
    <property type="match status" value="1"/>
</dbReference>
<dbReference type="Pfam" id="PF22769">
    <property type="entry name" value="DCD"/>
    <property type="match status" value="1"/>
</dbReference>
<dbReference type="SUPFAM" id="SSF51283">
    <property type="entry name" value="dUTPase-like"/>
    <property type="match status" value="1"/>
</dbReference>
<sequence>MSIKSDRWIRRAAEAGMIEPFEAGQVRTANGGRIVSYGTSSYGYDVRCADEFKIFTNINSTIVDPKQFDEKSFVDFKGDVCIIPPNSFALARTVEYFRIPRSVLTICLGKSTYARCGIIVNVTPLEPEWEGHVTLEFSNTTPLPAKIYAGEGCAQMLFLESDEVCETSYRDRGGKYQGQRGVTLPRT</sequence>
<organism>
    <name type="scientific">Bordetella petrii (strain ATCC BAA-461 / DSM 12804 / CCUG 43448)</name>
    <dbReference type="NCBI Taxonomy" id="340100"/>
    <lineage>
        <taxon>Bacteria</taxon>
        <taxon>Pseudomonadati</taxon>
        <taxon>Pseudomonadota</taxon>
        <taxon>Betaproteobacteria</taxon>
        <taxon>Burkholderiales</taxon>
        <taxon>Alcaligenaceae</taxon>
        <taxon>Bordetella</taxon>
    </lineage>
</organism>
<comment type="function">
    <text evidence="1">Catalyzes the deamination of dCTP to dUTP.</text>
</comment>
<comment type="catalytic activity">
    <reaction evidence="1">
        <text>dCTP + H2O + H(+) = dUTP + NH4(+)</text>
        <dbReference type="Rhea" id="RHEA:22680"/>
        <dbReference type="ChEBI" id="CHEBI:15377"/>
        <dbReference type="ChEBI" id="CHEBI:15378"/>
        <dbReference type="ChEBI" id="CHEBI:28938"/>
        <dbReference type="ChEBI" id="CHEBI:61481"/>
        <dbReference type="ChEBI" id="CHEBI:61555"/>
        <dbReference type="EC" id="3.5.4.13"/>
    </reaction>
</comment>
<comment type="pathway">
    <text evidence="1">Pyrimidine metabolism; dUMP biosynthesis; dUMP from dCTP (dUTP route): step 1/2.</text>
</comment>
<comment type="subunit">
    <text evidence="1">Homotrimer.</text>
</comment>
<comment type="similarity">
    <text evidence="1">Belongs to the dCTP deaminase family.</text>
</comment>
<name>DCD_BORPD</name>
<feature type="chain" id="PRO_1000096407" description="dCTP deaminase">
    <location>
        <begin position="1"/>
        <end position="187"/>
    </location>
</feature>
<feature type="active site" description="Proton donor/acceptor" evidence="1">
    <location>
        <position position="136"/>
    </location>
</feature>
<feature type="binding site" evidence="1">
    <location>
        <begin position="110"/>
        <end position="115"/>
    </location>
    <ligand>
        <name>dCTP</name>
        <dbReference type="ChEBI" id="CHEBI:61481"/>
    </ligand>
</feature>
<feature type="binding site" evidence="1">
    <location>
        <begin position="134"/>
        <end position="136"/>
    </location>
    <ligand>
        <name>dCTP</name>
        <dbReference type="ChEBI" id="CHEBI:61481"/>
    </ligand>
</feature>
<feature type="binding site" evidence="1">
    <location>
        <position position="155"/>
    </location>
    <ligand>
        <name>dCTP</name>
        <dbReference type="ChEBI" id="CHEBI:61481"/>
    </ligand>
</feature>
<feature type="binding site" evidence="1">
    <location>
        <position position="169"/>
    </location>
    <ligand>
        <name>dCTP</name>
        <dbReference type="ChEBI" id="CHEBI:61481"/>
    </ligand>
</feature>
<feature type="binding site" evidence="1">
    <location>
        <position position="179"/>
    </location>
    <ligand>
        <name>dCTP</name>
        <dbReference type="ChEBI" id="CHEBI:61481"/>
    </ligand>
</feature>
<protein>
    <recommendedName>
        <fullName evidence="1">dCTP deaminase</fullName>
        <ecNumber evidence="1">3.5.4.13</ecNumber>
    </recommendedName>
    <alternativeName>
        <fullName evidence="1">Deoxycytidine triphosphate deaminase</fullName>
    </alternativeName>
</protein>